<organism>
    <name type="scientific">Shewanella sp. (strain MR-7)</name>
    <dbReference type="NCBI Taxonomy" id="60481"/>
    <lineage>
        <taxon>Bacteria</taxon>
        <taxon>Pseudomonadati</taxon>
        <taxon>Pseudomonadota</taxon>
        <taxon>Gammaproteobacteria</taxon>
        <taxon>Alteromonadales</taxon>
        <taxon>Shewanellaceae</taxon>
        <taxon>Shewanella</taxon>
    </lineage>
</organism>
<sequence length="419" mass="44792">MDKLAIQASPPLAGDVIISGAKNAALPILMAGVLAETDFIVSNVPNLRDVSTSCKLLRCLGAEVDELGNGQIRISTKNLNEFCAPYDLVKTMRASILILGPLLARYGTADVSLPGGCAIGARPVNLHLHGLEMMGAKIEVKEGYIKARVDGRLKGAHIFMDMVSVGATENLLMAAALADGETVIENAAREPEVIDLANCLIAMGAKITGVGSATLRIQGVERLQGCEYRVMPDRIETGSFLVAAAVTRGRIRCLKADPASLESVIAKLEDAGAKITTGEDWIELDMEGKRPKAVNIKTAPYPGFPTDMQAQFCVLNVLAQGTATITETIFENRFMHVPELIRMGANMELEGNTCIIQGIESLSGAQVMATDLRASASLVIAGLVADGKTIVDRIYHLDRGYEHIEQKFQGLGAHVERVQ</sequence>
<name>MURA_SHESR</name>
<reference key="1">
    <citation type="submission" date="2006-08" db="EMBL/GenBank/DDBJ databases">
        <title>Complete sequence of chromosome 1 of Shewanella sp. MR-7.</title>
        <authorList>
            <person name="Copeland A."/>
            <person name="Lucas S."/>
            <person name="Lapidus A."/>
            <person name="Barry K."/>
            <person name="Detter J.C."/>
            <person name="Glavina del Rio T."/>
            <person name="Hammon N."/>
            <person name="Israni S."/>
            <person name="Dalin E."/>
            <person name="Tice H."/>
            <person name="Pitluck S."/>
            <person name="Kiss H."/>
            <person name="Brettin T."/>
            <person name="Bruce D."/>
            <person name="Han C."/>
            <person name="Tapia R."/>
            <person name="Gilna P."/>
            <person name="Schmutz J."/>
            <person name="Larimer F."/>
            <person name="Land M."/>
            <person name="Hauser L."/>
            <person name="Kyrpides N."/>
            <person name="Mikhailova N."/>
            <person name="Nealson K."/>
            <person name="Konstantinidis K."/>
            <person name="Klappenbach J."/>
            <person name="Tiedje J."/>
            <person name="Richardson P."/>
        </authorList>
    </citation>
    <scope>NUCLEOTIDE SEQUENCE [LARGE SCALE GENOMIC DNA]</scope>
    <source>
        <strain>MR-7</strain>
    </source>
</reference>
<protein>
    <recommendedName>
        <fullName evidence="1">UDP-N-acetylglucosamine 1-carboxyvinyltransferase</fullName>
        <ecNumber evidence="1">2.5.1.7</ecNumber>
    </recommendedName>
    <alternativeName>
        <fullName evidence="1">Enoylpyruvate transferase</fullName>
    </alternativeName>
    <alternativeName>
        <fullName evidence="1">UDP-N-acetylglucosamine enolpyruvyl transferase</fullName>
        <shortName evidence="1">EPT</shortName>
    </alternativeName>
</protein>
<evidence type="ECO:0000255" key="1">
    <source>
        <dbReference type="HAMAP-Rule" id="MF_00111"/>
    </source>
</evidence>
<proteinExistence type="inferred from homology"/>
<feature type="chain" id="PRO_1000023106" description="UDP-N-acetylglucosamine 1-carboxyvinyltransferase">
    <location>
        <begin position="1"/>
        <end position="419"/>
    </location>
</feature>
<feature type="active site" description="Proton donor" evidence="1">
    <location>
        <position position="117"/>
    </location>
</feature>
<feature type="binding site" evidence="1">
    <location>
        <begin position="22"/>
        <end position="23"/>
    </location>
    <ligand>
        <name>phosphoenolpyruvate</name>
        <dbReference type="ChEBI" id="CHEBI:58702"/>
    </ligand>
</feature>
<feature type="binding site" evidence="1">
    <location>
        <position position="93"/>
    </location>
    <ligand>
        <name>UDP-N-acetyl-alpha-D-glucosamine</name>
        <dbReference type="ChEBI" id="CHEBI:57705"/>
    </ligand>
</feature>
<feature type="binding site" evidence="1">
    <location>
        <position position="307"/>
    </location>
    <ligand>
        <name>UDP-N-acetyl-alpha-D-glucosamine</name>
        <dbReference type="ChEBI" id="CHEBI:57705"/>
    </ligand>
</feature>
<feature type="binding site" evidence="1">
    <location>
        <position position="329"/>
    </location>
    <ligand>
        <name>UDP-N-acetyl-alpha-D-glucosamine</name>
        <dbReference type="ChEBI" id="CHEBI:57705"/>
    </ligand>
</feature>
<feature type="modified residue" description="2-(S-cysteinyl)pyruvic acid O-phosphothioketal" evidence="1">
    <location>
        <position position="117"/>
    </location>
</feature>
<comment type="function">
    <text evidence="1">Cell wall formation. Adds enolpyruvyl to UDP-N-acetylglucosamine.</text>
</comment>
<comment type="catalytic activity">
    <reaction evidence="1">
        <text>phosphoenolpyruvate + UDP-N-acetyl-alpha-D-glucosamine = UDP-N-acetyl-3-O-(1-carboxyvinyl)-alpha-D-glucosamine + phosphate</text>
        <dbReference type="Rhea" id="RHEA:18681"/>
        <dbReference type="ChEBI" id="CHEBI:43474"/>
        <dbReference type="ChEBI" id="CHEBI:57705"/>
        <dbReference type="ChEBI" id="CHEBI:58702"/>
        <dbReference type="ChEBI" id="CHEBI:68483"/>
        <dbReference type="EC" id="2.5.1.7"/>
    </reaction>
</comment>
<comment type="pathway">
    <text evidence="1">Cell wall biogenesis; peptidoglycan biosynthesis.</text>
</comment>
<comment type="subcellular location">
    <subcellularLocation>
        <location evidence="1">Cytoplasm</location>
    </subcellularLocation>
</comment>
<comment type="similarity">
    <text evidence="1">Belongs to the EPSP synthase family. MurA subfamily.</text>
</comment>
<keyword id="KW-0131">Cell cycle</keyword>
<keyword id="KW-0132">Cell division</keyword>
<keyword id="KW-0133">Cell shape</keyword>
<keyword id="KW-0961">Cell wall biogenesis/degradation</keyword>
<keyword id="KW-0963">Cytoplasm</keyword>
<keyword id="KW-0573">Peptidoglycan synthesis</keyword>
<keyword id="KW-0670">Pyruvate</keyword>
<keyword id="KW-0808">Transferase</keyword>
<accession>Q0HRD6</accession>
<gene>
    <name evidence="1" type="primary">murA</name>
    <name type="ordered locus">Shewmr7_3337</name>
</gene>
<dbReference type="EC" id="2.5.1.7" evidence="1"/>
<dbReference type="EMBL" id="CP000444">
    <property type="protein sequence ID" value="ABI44319.1"/>
    <property type="molecule type" value="Genomic_DNA"/>
</dbReference>
<dbReference type="SMR" id="Q0HRD6"/>
<dbReference type="KEGG" id="shm:Shewmr7_3337"/>
<dbReference type="HOGENOM" id="CLU_027387_0_0_6"/>
<dbReference type="UniPathway" id="UPA00219"/>
<dbReference type="GO" id="GO:0005737">
    <property type="term" value="C:cytoplasm"/>
    <property type="evidence" value="ECO:0007669"/>
    <property type="project" value="UniProtKB-SubCell"/>
</dbReference>
<dbReference type="GO" id="GO:0008760">
    <property type="term" value="F:UDP-N-acetylglucosamine 1-carboxyvinyltransferase activity"/>
    <property type="evidence" value="ECO:0007669"/>
    <property type="project" value="UniProtKB-UniRule"/>
</dbReference>
<dbReference type="GO" id="GO:0051301">
    <property type="term" value="P:cell division"/>
    <property type="evidence" value="ECO:0007669"/>
    <property type="project" value="UniProtKB-KW"/>
</dbReference>
<dbReference type="GO" id="GO:0071555">
    <property type="term" value="P:cell wall organization"/>
    <property type="evidence" value="ECO:0007669"/>
    <property type="project" value="UniProtKB-KW"/>
</dbReference>
<dbReference type="GO" id="GO:0009252">
    <property type="term" value="P:peptidoglycan biosynthetic process"/>
    <property type="evidence" value="ECO:0007669"/>
    <property type="project" value="UniProtKB-UniRule"/>
</dbReference>
<dbReference type="GO" id="GO:0008360">
    <property type="term" value="P:regulation of cell shape"/>
    <property type="evidence" value="ECO:0007669"/>
    <property type="project" value="UniProtKB-KW"/>
</dbReference>
<dbReference type="GO" id="GO:0019277">
    <property type="term" value="P:UDP-N-acetylgalactosamine biosynthetic process"/>
    <property type="evidence" value="ECO:0007669"/>
    <property type="project" value="InterPro"/>
</dbReference>
<dbReference type="CDD" id="cd01555">
    <property type="entry name" value="UdpNAET"/>
    <property type="match status" value="1"/>
</dbReference>
<dbReference type="FunFam" id="3.65.10.10:FF:000002">
    <property type="entry name" value="UDP-N-acetylglucosamine 1-carboxyvinyltransferase"/>
    <property type="match status" value="1"/>
</dbReference>
<dbReference type="Gene3D" id="3.65.10.10">
    <property type="entry name" value="Enolpyruvate transferase domain"/>
    <property type="match status" value="2"/>
</dbReference>
<dbReference type="HAMAP" id="MF_00111">
    <property type="entry name" value="MurA"/>
    <property type="match status" value="1"/>
</dbReference>
<dbReference type="InterPro" id="IPR001986">
    <property type="entry name" value="Enolpyruvate_Tfrase_dom"/>
</dbReference>
<dbReference type="InterPro" id="IPR036968">
    <property type="entry name" value="Enolpyruvate_Tfrase_sf"/>
</dbReference>
<dbReference type="InterPro" id="IPR050068">
    <property type="entry name" value="MurA_subfamily"/>
</dbReference>
<dbReference type="InterPro" id="IPR013792">
    <property type="entry name" value="RNA3'P_cycl/enolpyr_Trfase_a/b"/>
</dbReference>
<dbReference type="InterPro" id="IPR005750">
    <property type="entry name" value="UDP_GlcNAc_COvinyl_MurA"/>
</dbReference>
<dbReference type="NCBIfam" id="TIGR01072">
    <property type="entry name" value="murA"/>
    <property type="match status" value="1"/>
</dbReference>
<dbReference type="NCBIfam" id="NF006873">
    <property type="entry name" value="PRK09369.1"/>
    <property type="match status" value="1"/>
</dbReference>
<dbReference type="PANTHER" id="PTHR43783">
    <property type="entry name" value="UDP-N-ACETYLGLUCOSAMINE 1-CARBOXYVINYLTRANSFERASE"/>
    <property type="match status" value="1"/>
</dbReference>
<dbReference type="PANTHER" id="PTHR43783:SF1">
    <property type="entry name" value="UDP-N-ACETYLGLUCOSAMINE 1-CARBOXYVINYLTRANSFERASE"/>
    <property type="match status" value="1"/>
</dbReference>
<dbReference type="Pfam" id="PF00275">
    <property type="entry name" value="EPSP_synthase"/>
    <property type="match status" value="1"/>
</dbReference>
<dbReference type="SUPFAM" id="SSF55205">
    <property type="entry name" value="EPT/RTPC-like"/>
    <property type="match status" value="1"/>
</dbReference>